<keyword id="KW-0227">DNA damage</keyword>
<keyword id="KW-0233">DNA recombination</keyword>
<keyword id="KW-0234">DNA repair</keyword>
<keyword id="KW-0238">DNA-binding</keyword>
<keyword id="KW-0539">Nucleus</keyword>
<keyword id="KW-1185">Reference proteome</keyword>
<accession>Q9FI55</accession>
<feature type="chain" id="PRO_0000440038" description="Protein MHF1 homolog">
    <location>
        <begin position="1"/>
        <end position="242"/>
    </location>
</feature>
<feature type="region of interest" description="Disordered" evidence="1">
    <location>
        <begin position="208"/>
        <end position="242"/>
    </location>
</feature>
<feature type="compositionally biased region" description="Polar residues" evidence="1">
    <location>
        <begin position="231"/>
        <end position="242"/>
    </location>
</feature>
<proteinExistence type="inferred from homology"/>
<gene>
    <name evidence="4" type="primary">MHF1</name>
    <name evidence="7" type="ordered locus">At5g50930</name>
    <name evidence="8" type="ORF">K3K7.8</name>
</gene>
<organism>
    <name type="scientific">Arabidopsis thaliana</name>
    <name type="common">Mouse-ear cress</name>
    <dbReference type="NCBI Taxonomy" id="3702"/>
    <lineage>
        <taxon>Eukaryota</taxon>
        <taxon>Viridiplantae</taxon>
        <taxon>Streptophyta</taxon>
        <taxon>Embryophyta</taxon>
        <taxon>Tracheophyta</taxon>
        <taxon>Spermatophyta</taxon>
        <taxon>Magnoliopsida</taxon>
        <taxon>eudicotyledons</taxon>
        <taxon>Gunneridae</taxon>
        <taxon>Pentapetalae</taxon>
        <taxon>rosids</taxon>
        <taxon>malvids</taxon>
        <taxon>Brassicales</taxon>
        <taxon>Brassicaceae</taxon>
        <taxon>Camelineae</taxon>
        <taxon>Arabidopsis</taxon>
    </lineage>
</organism>
<dbReference type="EMBL" id="AB017063">
    <property type="protein sequence ID" value="BAB08739.1"/>
    <property type="molecule type" value="Genomic_DNA"/>
</dbReference>
<dbReference type="EMBL" id="CP002688">
    <property type="protein sequence ID" value="AED96012.1"/>
    <property type="molecule type" value="Genomic_DNA"/>
</dbReference>
<dbReference type="RefSeq" id="NP_199906.1">
    <property type="nucleotide sequence ID" value="NM_124472.4"/>
</dbReference>
<dbReference type="SMR" id="Q9FI55"/>
<dbReference type="STRING" id="3702.Q9FI55"/>
<dbReference type="iPTMnet" id="Q9FI55"/>
<dbReference type="PaxDb" id="3702-AT5G50930.1"/>
<dbReference type="ProteomicsDB" id="224480"/>
<dbReference type="EnsemblPlants" id="AT5G50930.1">
    <property type="protein sequence ID" value="AT5G50930.1"/>
    <property type="gene ID" value="AT5G50930"/>
</dbReference>
<dbReference type="GeneID" id="835166"/>
<dbReference type="Gramene" id="AT5G50930.1">
    <property type="protein sequence ID" value="AT5G50930.1"/>
    <property type="gene ID" value="AT5G50930"/>
</dbReference>
<dbReference type="KEGG" id="ath:AT5G50930"/>
<dbReference type="Araport" id="AT5G50930"/>
<dbReference type="TAIR" id="AT5G50930">
    <property type="gene designation" value="MHF1"/>
</dbReference>
<dbReference type="eggNOG" id="ENOG502S2ZK">
    <property type="taxonomic scope" value="Eukaryota"/>
</dbReference>
<dbReference type="HOGENOM" id="CLU_100369_1_0_1"/>
<dbReference type="InParanoid" id="Q9FI55"/>
<dbReference type="OMA" id="CFAMDVG"/>
<dbReference type="PhylomeDB" id="Q9FI55"/>
<dbReference type="PRO" id="PR:Q9FI55"/>
<dbReference type="Proteomes" id="UP000006548">
    <property type="component" value="Chromosome 5"/>
</dbReference>
<dbReference type="ExpressionAtlas" id="Q9FI55">
    <property type="expression patterns" value="baseline and differential"/>
</dbReference>
<dbReference type="GO" id="GO:0071821">
    <property type="term" value="C:FANCM-MHF complex"/>
    <property type="evidence" value="ECO:0007669"/>
    <property type="project" value="InterPro"/>
</dbReference>
<dbReference type="GO" id="GO:0003677">
    <property type="term" value="F:DNA binding"/>
    <property type="evidence" value="ECO:0007669"/>
    <property type="project" value="UniProtKB-KW"/>
</dbReference>
<dbReference type="GO" id="GO:0046982">
    <property type="term" value="F:protein heterodimerization activity"/>
    <property type="evidence" value="ECO:0007669"/>
    <property type="project" value="InterPro"/>
</dbReference>
<dbReference type="GO" id="GO:0007129">
    <property type="term" value="P:homologous chromosome pairing at meiosis"/>
    <property type="evidence" value="ECO:0000316"/>
    <property type="project" value="TAIR"/>
</dbReference>
<dbReference type="GO" id="GO:0036297">
    <property type="term" value="P:interstrand cross-link repair"/>
    <property type="evidence" value="ECO:0000315"/>
    <property type="project" value="TAIR"/>
</dbReference>
<dbReference type="GO" id="GO:0006312">
    <property type="term" value="P:mitotic recombination"/>
    <property type="evidence" value="ECO:0000315"/>
    <property type="project" value="TAIR"/>
</dbReference>
<dbReference type="GO" id="GO:0007131">
    <property type="term" value="P:reciprocal meiotic recombination"/>
    <property type="evidence" value="ECO:0000315"/>
    <property type="project" value="TAIR"/>
</dbReference>
<dbReference type="CDD" id="cd22919">
    <property type="entry name" value="HFD_CENP-S"/>
    <property type="match status" value="1"/>
</dbReference>
<dbReference type="FunFam" id="1.10.20.10:FF:000092">
    <property type="entry name" value="Protein MHF1-like isoform A"/>
    <property type="match status" value="1"/>
</dbReference>
<dbReference type="Gene3D" id="1.10.20.10">
    <property type="entry name" value="Histone, subunit A"/>
    <property type="match status" value="1"/>
</dbReference>
<dbReference type="InterPro" id="IPR029003">
    <property type="entry name" value="CENP-S/Mhf1"/>
</dbReference>
<dbReference type="InterPro" id="IPR009072">
    <property type="entry name" value="Histone-fold"/>
</dbReference>
<dbReference type="PANTHER" id="PTHR22980:SF0">
    <property type="entry name" value="CENTROMERE PROTEIN S"/>
    <property type="match status" value="1"/>
</dbReference>
<dbReference type="PANTHER" id="PTHR22980">
    <property type="entry name" value="CORTISTATIN"/>
    <property type="match status" value="1"/>
</dbReference>
<dbReference type="Pfam" id="PF15630">
    <property type="entry name" value="CENP-S"/>
    <property type="match status" value="1"/>
</dbReference>
<dbReference type="SUPFAM" id="SSF47113">
    <property type="entry name" value="Histone-fold"/>
    <property type="match status" value="1"/>
</dbReference>
<comment type="function">
    <text evidence="2 3">Involved in the promotion of spontaneous somatic homologous recombination (HR) events, which is opposite to the function of FANCM in ordered HR. Only FANCM is essential for replicative repair in the absence of the endonuclease MUS81 (PubMed:24635147). Acts in the same pathway as FANCM to restrain class II meiotic crossing over (CO), and acts with FANCM during meiosis to repair interstrand cross-links (ICLs) (PubMed:24635147, PubMed:25038251). This common pathway between MHF1 and FANCM is in parallel to the pathway that involves the RECQ4A helicase (PubMed:24635147).</text>
</comment>
<comment type="subcellular location">
    <subcellularLocation>
        <location evidence="6">Nucleus</location>
    </subcellularLocation>
</comment>
<comment type="disruption phenotype">
    <text evidence="2">No visible phenotype under normal growth conditions, but mutant plants exhibit a defect in somatic homologous recombination.</text>
</comment>
<comment type="similarity">
    <text evidence="5">Belongs to the TAF9 family. CENP-S/MHF1 subfamily.</text>
</comment>
<evidence type="ECO:0000256" key="1">
    <source>
        <dbReference type="SAM" id="MobiDB-lite"/>
    </source>
</evidence>
<evidence type="ECO:0000269" key="2">
    <source>
    </source>
</evidence>
<evidence type="ECO:0000269" key="3">
    <source>
    </source>
</evidence>
<evidence type="ECO:0000303" key="4">
    <source>
    </source>
</evidence>
<evidence type="ECO:0000305" key="5"/>
<evidence type="ECO:0000305" key="6">
    <source>
    </source>
</evidence>
<evidence type="ECO:0000312" key="7">
    <source>
        <dbReference type="Araport" id="AT5G50930"/>
    </source>
</evidence>
<evidence type="ECO:0000312" key="8">
    <source>
        <dbReference type="EMBL" id="AED96012.1"/>
    </source>
</evidence>
<reference key="1">
    <citation type="journal article" date="1999" name="DNA Res.">
        <title>Structural analysis of Arabidopsis thaliana chromosome 5. IX. Sequence features of the regions of 1,011,550 bp covered by seventeen P1 and TAC clones.</title>
        <authorList>
            <person name="Kaneko T."/>
            <person name="Katoh T."/>
            <person name="Sato S."/>
            <person name="Nakamura Y."/>
            <person name="Asamizu E."/>
            <person name="Kotani H."/>
            <person name="Miyajima N."/>
            <person name="Tabata S."/>
        </authorList>
    </citation>
    <scope>NUCLEOTIDE SEQUENCE [LARGE SCALE GENOMIC DNA]</scope>
    <source>
        <strain>cv. Columbia</strain>
    </source>
</reference>
<reference key="2">
    <citation type="journal article" date="2017" name="Plant J.">
        <title>Araport11: a complete reannotation of the Arabidopsis thaliana reference genome.</title>
        <authorList>
            <person name="Cheng C.Y."/>
            <person name="Krishnakumar V."/>
            <person name="Chan A.P."/>
            <person name="Thibaud-Nissen F."/>
            <person name="Schobel S."/>
            <person name="Town C.D."/>
        </authorList>
    </citation>
    <scope>GENOME REANNOTATION</scope>
    <source>
        <strain>cv. Columbia</strain>
    </source>
</reference>
<reference key="3">
    <citation type="journal article" date="2014" name="Plant J.">
        <title>MHF1 plays Fanconi anaemia complementation group M protein (FANCM)-dependent and FANCM-independent roles in DNA repair and homologous recombination in plants.</title>
        <authorList>
            <person name="Dangel N.J."/>
            <person name="Knoll A."/>
            <person name="Puchta H."/>
        </authorList>
    </citation>
    <scope>FUNCTION</scope>
    <scope>DISRUPTION PHENOTYPE</scope>
</reference>
<reference key="4">
    <citation type="journal article" date="2014" name="Nucleic Acids Res.">
        <title>FANCM-associated proteins MHF1 and MHF2, but not the other Fanconi anemia factors, limit meiotic crossovers.</title>
        <authorList>
            <person name="Girard C."/>
            <person name="Crismani W."/>
            <person name="Froger N."/>
            <person name="Mazel J."/>
            <person name="Lemhemdi A."/>
            <person name="Horlow C."/>
            <person name="Mercier R."/>
        </authorList>
    </citation>
    <scope>FUNCTION</scope>
</reference>
<name>CENPS_ARATH</name>
<sequence>MFNISYAKRNAKYLFKLLAWCMMIEEAGPNIGNKQKVVLQLSKMLIMYIILHINAAFWTWRGYLKRCVLHFVFPRIFLPLLSDSPTITQAKKPSYCFAMDVGGEDISDLQVDQIVEEYSMDDLIRDRFRLSAISIAEAEAKKNGMEIGGPVVACVADLAFKYAENVAKDLELFAHHAGRKVVNMDDVVLSAHRNDNLAASLRSLCNELKAKEPQSERKRKKGSAKKEDKASSSNAVRITTDL</sequence>
<protein>
    <recommendedName>
        <fullName evidence="4">Protein MHF1 homolog</fullName>
        <shortName evidence="4">AtMHF1</shortName>
    </recommendedName>
</protein>